<sequence length="329" mass="38277">MGQLQKAKINQTQKAIVEIKNRFQKYFAKNLNLSRVTAPLFVEGQSGLNDHLDHKQKAVSFYAKKLNKTLEIVQSLAKWKRLALLDYGFSLYEGLYTDMNAIRADDDIDEIHSIYVDQWDWEILINKQDCTLDFLKSIVNKIYSTIKTVQLEIDQLYNPKQIILPDSITFIGSQELEDLYPHLTPSQREYEFAKMHQAIFIYQIGYPLKSGYIQSIRSPEYDNWNLNGDLIVYHKLNDQAIELSSMGIRVSKQDFIKQTNFANLKNDQENNFYHQMILNDQLPQTIGGGIGQSRLCMFLLNKKHIGEVQVSVWPNEYKDELLKKGIKLL</sequence>
<name>ASNA_UREU1</name>
<organism>
    <name type="scientific">Ureaplasma urealyticum serovar 10 (strain ATCC 33699 / Western)</name>
    <dbReference type="NCBI Taxonomy" id="565575"/>
    <lineage>
        <taxon>Bacteria</taxon>
        <taxon>Bacillati</taxon>
        <taxon>Mycoplasmatota</taxon>
        <taxon>Mycoplasmoidales</taxon>
        <taxon>Mycoplasmoidaceae</taxon>
        <taxon>Ureaplasma</taxon>
    </lineage>
</organism>
<accession>B5ZBH5</accession>
<proteinExistence type="inferred from homology"/>
<comment type="catalytic activity">
    <reaction evidence="1">
        <text>L-aspartate + NH4(+) + ATP = L-asparagine + AMP + diphosphate + H(+)</text>
        <dbReference type="Rhea" id="RHEA:11372"/>
        <dbReference type="ChEBI" id="CHEBI:15378"/>
        <dbReference type="ChEBI" id="CHEBI:28938"/>
        <dbReference type="ChEBI" id="CHEBI:29991"/>
        <dbReference type="ChEBI" id="CHEBI:30616"/>
        <dbReference type="ChEBI" id="CHEBI:33019"/>
        <dbReference type="ChEBI" id="CHEBI:58048"/>
        <dbReference type="ChEBI" id="CHEBI:456215"/>
        <dbReference type="EC" id="6.3.1.1"/>
    </reaction>
</comment>
<comment type="pathway">
    <text evidence="1">Amino-acid biosynthesis; L-asparagine biosynthesis; L-asparagine from L-aspartate (ammonia route): step 1/1.</text>
</comment>
<comment type="subcellular location">
    <subcellularLocation>
        <location evidence="1">Cytoplasm</location>
    </subcellularLocation>
</comment>
<comment type="similarity">
    <text evidence="1">Belongs to the class-II aminoacyl-tRNA synthetase family. AsnA subfamily.</text>
</comment>
<gene>
    <name evidence="1" type="primary">asnA</name>
    <name type="ordered locus">UUR10_0372</name>
</gene>
<feature type="chain" id="PRO_1000129137" description="Aspartate--ammonia ligase">
    <location>
        <begin position="1"/>
        <end position="329"/>
    </location>
</feature>
<evidence type="ECO:0000255" key="1">
    <source>
        <dbReference type="HAMAP-Rule" id="MF_00555"/>
    </source>
</evidence>
<dbReference type="EC" id="6.3.1.1" evidence="1"/>
<dbReference type="EMBL" id="CP001184">
    <property type="protein sequence ID" value="ACI60345.1"/>
    <property type="molecule type" value="Genomic_DNA"/>
</dbReference>
<dbReference type="RefSeq" id="WP_004026193.1">
    <property type="nucleotide sequence ID" value="NC_011374.1"/>
</dbReference>
<dbReference type="SMR" id="B5ZBH5"/>
<dbReference type="STRING" id="565575.UUR10_0372"/>
<dbReference type="KEGG" id="uue:UUR10_0372"/>
<dbReference type="eggNOG" id="COG2502">
    <property type="taxonomic scope" value="Bacteria"/>
</dbReference>
<dbReference type="HOGENOM" id="CLU_071543_0_0_14"/>
<dbReference type="OrthoDB" id="9766088at2"/>
<dbReference type="UniPathway" id="UPA00134">
    <property type="reaction ID" value="UER00194"/>
</dbReference>
<dbReference type="Proteomes" id="UP000002018">
    <property type="component" value="Chromosome"/>
</dbReference>
<dbReference type="GO" id="GO:0005829">
    <property type="term" value="C:cytosol"/>
    <property type="evidence" value="ECO:0007669"/>
    <property type="project" value="TreeGrafter"/>
</dbReference>
<dbReference type="GO" id="GO:0004071">
    <property type="term" value="F:aspartate-ammonia ligase activity"/>
    <property type="evidence" value="ECO:0007669"/>
    <property type="project" value="UniProtKB-UniRule"/>
</dbReference>
<dbReference type="GO" id="GO:0005524">
    <property type="term" value="F:ATP binding"/>
    <property type="evidence" value="ECO:0007669"/>
    <property type="project" value="UniProtKB-UniRule"/>
</dbReference>
<dbReference type="GO" id="GO:0070981">
    <property type="term" value="P:L-asparagine biosynthetic process"/>
    <property type="evidence" value="ECO:0007669"/>
    <property type="project" value="UniProtKB-UniRule"/>
</dbReference>
<dbReference type="Gene3D" id="3.30.930.10">
    <property type="entry name" value="Bira Bifunctional Protein, Domain 2"/>
    <property type="match status" value="1"/>
</dbReference>
<dbReference type="HAMAP" id="MF_00555">
    <property type="entry name" value="AsnA"/>
    <property type="match status" value="1"/>
</dbReference>
<dbReference type="InterPro" id="IPR006195">
    <property type="entry name" value="aa-tRNA-synth_II"/>
</dbReference>
<dbReference type="InterPro" id="IPR045864">
    <property type="entry name" value="aa-tRNA-synth_II/BPL/LPL"/>
</dbReference>
<dbReference type="InterPro" id="IPR004618">
    <property type="entry name" value="AsnA"/>
</dbReference>
<dbReference type="PANTHER" id="PTHR30073">
    <property type="entry name" value="ASPARTATE--AMMONIA LIGASE"/>
    <property type="match status" value="1"/>
</dbReference>
<dbReference type="PANTHER" id="PTHR30073:SF5">
    <property type="entry name" value="ASPARTATE--AMMONIA LIGASE"/>
    <property type="match status" value="1"/>
</dbReference>
<dbReference type="Pfam" id="PF03590">
    <property type="entry name" value="AsnA"/>
    <property type="match status" value="1"/>
</dbReference>
<dbReference type="PIRSF" id="PIRSF001555">
    <property type="entry name" value="Asp_ammon_ligase"/>
    <property type="match status" value="1"/>
</dbReference>
<dbReference type="SUPFAM" id="SSF55681">
    <property type="entry name" value="Class II aaRS and biotin synthetases"/>
    <property type="match status" value="1"/>
</dbReference>
<dbReference type="PROSITE" id="PS50862">
    <property type="entry name" value="AA_TRNA_LIGASE_II"/>
    <property type="match status" value="1"/>
</dbReference>
<keyword id="KW-0028">Amino-acid biosynthesis</keyword>
<keyword id="KW-0061">Asparagine biosynthesis</keyword>
<keyword id="KW-0067">ATP-binding</keyword>
<keyword id="KW-0963">Cytoplasm</keyword>
<keyword id="KW-0436">Ligase</keyword>
<keyword id="KW-0547">Nucleotide-binding</keyword>
<protein>
    <recommendedName>
        <fullName evidence="1">Aspartate--ammonia ligase</fullName>
        <ecNumber evidence="1">6.3.1.1</ecNumber>
    </recommendedName>
    <alternativeName>
        <fullName evidence="1">Asparagine synthetase A</fullName>
    </alternativeName>
</protein>
<reference key="1">
    <citation type="submission" date="2008-10" db="EMBL/GenBank/DDBJ databases">
        <title>Genome sequence of Ureaplasma urealyticum serovar 10 ATCC-33699.</title>
        <authorList>
            <person name="Shrivastava S."/>
            <person name="Methe B.A."/>
            <person name="Glass J."/>
            <person name="White K."/>
            <person name="Duffy L.B."/>
        </authorList>
    </citation>
    <scope>NUCLEOTIDE SEQUENCE [LARGE SCALE GENOMIC DNA]</scope>
    <source>
        <strain>ATCC 33699 / Western</strain>
    </source>
</reference>